<name>PYRG_STRR6</name>
<proteinExistence type="inferred from homology"/>
<evidence type="ECO:0000255" key="1">
    <source>
        <dbReference type="HAMAP-Rule" id="MF_01227"/>
    </source>
</evidence>
<protein>
    <recommendedName>
        <fullName evidence="1">CTP synthase</fullName>
        <ecNumber evidence="1">6.3.4.2</ecNumber>
    </recommendedName>
    <alternativeName>
        <fullName evidence="1">Cytidine 5'-triphosphate synthase</fullName>
    </alternativeName>
    <alternativeName>
        <fullName evidence="1">Cytidine triphosphate synthetase</fullName>
        <shortName evidence="1">CTP synthetase</shortName>
        <shortName evidence="1">CTPS</shortName>
    </alternativeName>
    <alternativeName>
        <fullName evidence="1">UTP--ammonia ligase</fullName>
    </alternativeName>
</protein>
<feature type="chain" id="PRO_0000138234" description="CTP synthase">
    <location>
        <begin position="1"/>
        <end position="535"/>
    </location>
</feature>
<feature type="domain" description="Glutamine amidotransferase type-1" evidence="1">
    <location>
        <begin position="293"/>
        <end position="535"/>
    </location>
</feature>
<feature type="region of interest" description="Amidoligase domain" evidence="1">
    <location>
        <begin position="1"/>
        <end position="268"/>
    </location>
</feature>
<feature type="active site" description="Nucleophile; for glutamine hydrolysis" evidence="1">
    <location>
        <position position="382"/>
    </location>
</feature>
<feature type="active site" evidence="1">
    <location>
        <position position="509"/>
    </location>
</feature>
<feature type="active site" evidence="1">
    <location>
        <position position="511"/>
    </location>
</feature>
<feature type="binding site" evidence="1">
    <location>
        <position position="14"/>
    </location>
    <ligand>
        <name>CTP</name>
        <dbReference type="ChEBI" id="CHEBI:37563"/>
        <note>allosteric inhibitor</note>
    </ligand>
</feature>
<feature type="binding site" evidence="1">
    <location>
        <position position="14"/>
    </location>
    <ligand>
        <name>UTP</name>
        <dbReference type="ChEBI" id="CHEBI:46398"/>
    </ligand>
</feature>
<feature type="binding site" evidence="1">
    <location>
        <begin position="15"/>
        <end position="20"/>
    </location>
    <ligand>
        <name>ATP</name>
        <dbReference type="ChEBI" id="CHEBI:30616"/>
    </ligand>
</feature>
<feature type="binding site" evidence="1">
    <location>
        <position position="55"/>
    </location>
    <ligand>
        <name>L-glutamine</name>
        <dbReference type="ChEBI" id="CHEBI:58359"/>
    </ligand>
</feature>
<feature type="binding site" evidence="1">
    <location>
        <position position="72"/>
    </location>
    <ligand>
        <name>ATP</name>
        <dbReference type="ChEBI" id="CHEBI:30616"/>
    </ligand>
</feature>
<feature type="binding site" evidence="1">
    <location>
        <position position="72"/>
    </location>
    <ligand>
        <name>Mg(2+)</name>
        <dbReference type="ChEBI" id="CHEBI:18420"/>
    </ligand>
</feature>
<feature type="binding site" evidence="1">
    <location>
        <position position="142"/>
    </location>
    <ligand>
        <name>Mg(2+)</name>
        <dbReference type="ChEBI" id="CHEBI:18420"/>
    </ligand>
</feature>
<feature type="binding site" evidence="1">
    <location>
        <begin position="149"/>
        <end position="151"/>
    </location>
    <ligand>
        <name>CTP</name>
        <dbReference type="ChEBI" id="CHEBI:37563"/>
        <note>allosteric inhibitor</note>
    </ligand>
</feature>
<feature type="binding site" evidence="1">
    <location>
        <begin position="189"/>
        <end position="194"/>
    </location>
    <ligand>
        <name>CTP</name>
        <dbReference type="ChEBI" id="CHEBI:37563"/>
        <note>allosteric inhibitor</note>
    </ligand>
</feature>
<feature type="binding site" evidence="1">
    <location>
        <begin position="189"/>
        <end position="194"/>
    </location>
    <ligand>
        <name>UTP</name>
        <dbReference type="ChEBI" id="CHEBI:46398"/>
    </ligand>
</feature>
<feature type="binding site" evidence="1">
    <location>
        <position position="225"/>
    </location>
    <ligand>
        <name>CTP</name>
        <dbReference type="ChEBI" id="CHEBI:37563"/>
        <note>allosteric inhibitor</note>
    </ligand>
</feature>
<feature type="binding site" evidence="1">
    <location>
        <position position="225"/>
    </location>
    <ligand>
        <name>UTP</name>
        <dbReference type="ChEBI" id="CHEBI:46398"/>
    </ligand>
</feature>
<feature type="binding site" evidence="1">
    <location>
        <position position="355"/>
    </location>
    <ligand>
        <name>L-glutamine</name>
        <dbReference type="ChEBI" id="CHEBI:58359"/>
    </ligand>
</feature>
<feature type="binding site" evidence="1">
    <location>
        <begin position="383"/>
        <end position="386"/>
    </location>
    <ligand>
        <name>L-glutamine</name>
        <dbReference type="ChEBI" id="CHEBI:58359"/>
    </ligand>
</feature>
<feature type="binding site" evidence="1">
    <location>
        <position position="406"/>
    </location>
    <ligand>
        <name>L-glutamine</name>
        <dbReference type="ChEBI" id="CHEBI:58359"/>
    </ligand>
</feature>
<feature type="binding site" evidence="1">
    <location>
        <position position="464"/>
    </location>
    <ligand>
        <name>L-glutamine</name>
        <dbReference type="ChEBI" id="CHEBI:58359"/>
    </ligand>
</feature>
<keyword id="KW-0067">ATP-binding</keyword>
<keyword id="KW-0315">Glutamine amidotransferase</keyword>
<keyword id="KW-0436">Ligase</keyword>
<keyword id="KW-0460">Magnesium</keyword>
<keyword id="KW-0479">Metal-binding</keyword>
<keyword id="KW-0547">Nucleotide-binding</keyword>
<keyword id="KW-0665">Pyrimidine biosynthesis</keyword>
<keyword id="KW-1185">Reference proteome</keyword>
<organism>
    <name type="scientific">Streptococcus pneumoniae (strain ATCC BAA-255 / R6)</name>
    <dbReference type="NCBI Taxonomy" id="171101"/>
    <lineage>
        <taxon>Bacteria</taxon>
        <taxon>Bacillati</taxon>
        <taxon>Bacillota</taxon>
        <taxon>Bacilli</taxon>
        <taxon>Lactobacillales</taxon>
        <taxon>Streptococcaceae</taxon>
        <taxon>Streptococcus</taxon>
    </lineage>
</organism>
<sequence length="535" mass="59257">MSTKYIFVTGGVVSSIGKGIVAASLGRLLKNRGLKVTIQKFDPYINIDPGTMSPYQHGEVFVTDDGAETDLDLGHYERFIDINLNKYSNVTTGKIYSEVLRKERRGEYLGATVQVIPHITDALKEKIKRAALTTDSDVIITEVGGTVGDIESLPFLEALRQMKADVGADNVMYIHTTLLPYLKAAGEMKTKPTQHSVKELRGLGIQPNMLVIRTEEPAGQGIKNKLAQFCDVAPEAVIESLDVEHLYQIPLNLQAQGMDQIVCDHLKLDAPAADMTEWSAMVDKVMNLKKQVKISLVGKYVELQDAYISVVEALKHSGYVNDVEVKINWVNANDVTAENVAELLSDADGIIVPGGFGQRGTEGKIQAIRYARENDVPMLGVCLGMQLTCIEFARHVLGLEGANSAELAPETKYPIIDIMRDQIDIEDMGGTLRLGLYPSKLKRGSKAAAAYHNQEVVQRRHRHRYEFNNAFREQFEAAGFVFSGVSPDNRLVEIVEIPENKFFVACQYHPELSSRPNRPEELYTAFVTAAVENSN</sequence>
<dbReference type="EC" id="6.3.4.2" evidence="1"/>
<dbReference type="EMBL" id="AE007317">
    <property type="protein sequence ID" value="AAK99242.1"/>
    <property type="molecule type" value="Genomic_DNA"/>
</dbReference>
<dbReference type="PIR" id="F97926">
    <property type="entry name" value="F97926"/>
</dbReference>
<dbReference type="RefSeq" id="NP_358032.1">
    <property type="nucleotide sequence ID" value="NC_003098.1"/>
</dbReference>
<dbReference type="RefSeq" id="WP_000105242.1">
    <property type="nucleotide sequence ID" value="NC_003098.1"/>
</dbReference>
<dbReference type="SMR" id="Q8DQY0"/>
<dbReference type="STRING" id="171101.spr0438"/>
<dbReference type="KEGG" id="spr:spr0438"/>
<dbReference type="PATRIC" id="fig|171101.6.peg.483"/>
<dbReference type="eggNOG" id="COG0504">
    <property type="taxonomic scope" value="Bacteria"/>
</dbReference>
<dbReference type="HOGENOM" id="CLU_011675_5_0_9"/>
<dbReference type="UniPathway" id="UPA00159">
    <property type="reaction ID" value="UER00277"/>
</dbReference>
<dbReference type="Proteomes" id="UP000000586">
    <property type="component" value="Chromosome"/>
</dbReference>
<dbReference type="GO" id="GO:0005829">
    <property type="term" value="C:cytosol"/>
    <property type="evidence" value="ECO:0000318"/>
    <property type="project" value="GO_Central"/>
</dbReference>
<dbReference type="GO" id="GO:0005524">
    <property type="term" value="F:ATP binding"/>
    <property type="evidence" value="ECO:0007669"/>
    <property type="project" value="UniProtKB-KW"/>
</dbReference>
<dbReference type="GO" id="GO:0003883">
    <property type="term" value="F:CTP synthase activity"/>
    <property type="evidence" value="ECO:0000318"/>
    <property type="project" value="GO_Central"/>
</dbReference>
<dbReference type="GO" id="GO:0004359">
    <property type="term" value="F:glutaminase activity"/>
    <property type="evidence" value="ECO:0007669"/>
    <property type="project" value="RHEA"/>
</dbReference>
<dbReference type="GO" id="GO:0042802">
    <property type="term" value="F:identical protein binding"/>
    <property type="evidence" value="ECO:0000318"/>
    <property type="project" value="GO_Central"/>
</dbReference>
<dbReference type="GO" id="GO:0046872">
    <property type="term" value="F:metal ion binding"/>
    <property type="evidence" value="ECO:0007669"/>
    <property type="project" value="UniProtKB-KW"/>
</dbReference>
<dbReference type="GO" id="GO:0044210">
    <property type="term" value="P:'de novo' CTP biosynthetic process"/>
    <property type="evidence" value="ECO:0007669"/>
    <property type="project" value="UniProtKB-UniRule"/>
</dbReference>
<dbReference type="GO" id="GO:0006241">
    <property type="term" value="P:CTP biosynthetic process"/>
    <property type="evidence" value="ECO:0000318"/>
    <property type="project" value="GO_Central"/>
</dbReference>
<dbReference type="GO" id="GO:0019856">
    <property type="term" value="P:pyrimidine nucleobase biosynthetic process"/>
    <property type="evidence" value="ECO:0000318"/>
    <property type="project" value="GO_Central"/>
</dbReference>
<dbReference type="CDD" id="cd03113">
    <property type="entry name" value="CTPS_N"/>
    <property type="match status" value="1"/>
</dbReference>
<dbReference type="CDD" id="cd01746">
    <property type="entry name" value="GATase1_CTP_Synthase"/>
    <property type="match status" value="1"/>
</dbReference>
<dbReference type="FunFam" id="3.40.50.300:FF:000009">
    <property type="entry name" value="CTP synthase"/>
    <property type="match status" value="1"/>
</dbReference>
<dbReference type="FunFam" id="3.40.50.880:FF:000002">
    <property type="entry name" value="CTP synthase"/>
    <property type="match status" value="1"/>
</dbReference>
<dbReference type="Gene3D" id="3.40.50.880">
    <property type="match status" value="1"/>
</dbReference>
<dbReference type="Gene3D" id="3.40.50.300">
    <property type="entry name" value="P-loop containing nucleotide triphosphate hydrolases"/>
    <property type="match status" value="1"/>
</dbReference>
<dbReference type="HAMAP" id="MF_01227">
    <property type="entry name" value="PyrG"/>
    <property type="match status" value="1"/>
</dbReference>
<dbReference type="InterPro" id="IPR029062">
    <property type="entry name" value="Class_I_gatase-like"/>
</dbReference>
<dbReference type="InterPro" id="IPR004468">
    <property type="entry name" value="CTP_synthase"/>
</dbReference>
<dbReference type="InterPro" id="IPR017456">
    <property type="entry name" value="CTP_synthase_N"/>
</dbReference>
<dbReference type="InterPro" id="IPR017926">
    <property type="entry name" value="GATASE"/>
</dbReference>
<dbReference type="InterPro" id="IPR033828">
    <property type="entry name" value="GATase1_CTP_Synthase"/>
</dbReference>
<dbReference type="InterPro" id="IPR027417">
    <property type="entry name" value="P-loop_NTPase"/>
</dbReference>
<dbReference type="NCBIfam" id="NF003792">
    <property type="entry name" value="PRK05380.1"/>
    <property type="match status" value="1"/>
</dbReference>
<dbReference type="NCBIfam" id="TIGR00337">
    <property type="entry name" value="PyrG"/>
    <property type="match status" value="1"/>
</dbReference>
<dbReference type="PANTHER" id="PTHR11550">
    <property type="entry name" value="CTP SYNTHASE"/>
    <property type="match status" value="1"/>
</dbReference>
<dbReference type="PANTHER" id="PTHR11550:SF0">
    <property type="entry name" value="CTP SYNTHASE-RELATED"/>
    <property type="match status" value="1"/>
</dbReference>
<dbReference type="Pfam" id="PF06418">
    <property type="entry name" value="CTP_synth_N"/>
    <property type="match status" value="1"/>
</dbReference>
<dbReference type="Pfam" id="PF00117">
    <property type="entry name" value="GATase"/>
    <property type="match status" value="1"/>
</dbReference>
<dbReference type="SUPFAM" id="SSF52317">
    <property type="entry name" value="Class I glutamine amidotransferase-like"/>
    <property type="match status" value="1"/>
</dbReference>
<dbReference type="SUPFAM" id="SSF52540">
    <property type="entry name" value="P-loop containing nucleoside triphosphate hydrolases"/>
    <property type="match status" value="1"/>
</dbReference>
<dbReference type="PROSITE" id="PS51273">
    <property type="entry name" value="GATASE_TYPE_1"/>
    <property type="match status" value="1"/>
</dbReference>
<accession>Q8DQY0</accession>
<comment type="function">
    <text evidence="1">Catalyzes the ATP-dependent amination of UTP to CTP with either L-glutamine or ammonia as the source of nitrogen. Regulates intracellular CTP levels through interactions with the four ribonucleotide triphosphates.</text>
</comment>
<comment type="catalytic activity">
    <reaction evidence="1">
        <text>UTP + L-glutamine + ATP + H2O = CTP + L-glutamate + ADP + phosphate + 2 H(+)</text>
        <dbReference type="Rhea" id="RHEA:26426"/>
        <dbReference type="ChEBI" id="CHEBI:15377"/>
        <dbReference type="ChEBI" id="CHEBI:15378"/>
        <dbReference type="ChEBI" id="CHEBI:29985"/>
        <dbReference type="ChEBI" id="CHEBI:30616"/>
        <dbReference type="ChEBI" id="CHEBI:37563"/>
        <dbReference type="ChEBI" id="CHEBI:43474"/>
        <dbReference type="ChEBI" id="CHEBI:46398"/>
        <dbReference type="ChEBI" id="CHEBI:58359"/>
        <dbReference type="ChEBI" id="CHEBI:456216"/>
        <dbReference type="EC" id="6.3.4.2"/>
    </reaction>
</comment>
<comment type="catalytic activity">
    <reaction evidence="1">
        <text>L-glutamine + H2O = L-glutamate + NH4(+)</text>
        <dbReference type="Rhea" id="RHEA:15889"/>
        <dbReference type="ChEBI" id="CHEBI:15377"/>
        <dbReference type="ChEBI" id="CHEBI:28938"/>
        <dbReference type="ChEBI" id="CHEBI:29985"/>
        <dbReference type="ChEBI" id="CHEBI:58359"/>
    </reaction>
</comment>
<comment type="catalytic activity">
    <reaction evidence="1">
        <text>UTP + NH4(+) + ATP = CTP + ADP + phosphate + 2 H(+)</text>
        <dbReference type="Rhea" id="RHEA:16597"/>
        <dbReference type="ChEBI" id="CHEBI:15378"/>
        <dbReference type="ChEBI" id="CHEBI:28938"/>
        <dbReference type="ChEBI" id="CHEBI:30616"/>
        <dbReference type="ChEBI" id="CHEBI:37563"/>
        <dbReference type="ChEBI" id="CHEBI:43474"/>
        <dbReference type="ChEBI" id="CHEBI:46398"/>
        <dbReference type="ChEBI" id="CHEBI:456216"/>
    </reaction>
</comment>
<comment type="activity regulation">
    <text evidence="1">Allosterically activated by GTP, when glutamine is the substrate; GTP has no effect on the reaction when ammonia is the substrate. The allosteric effector GTP functions by stabilizing the protein conformation that binds the tetrahedral intermediate(s) formed during glutamine hydrolysis. Inhibited by the product CTP, via allosteric rather than competitive inhibition.</text>
</comment>
<comment type="pathway">
    <text evidence="1">Pyrimidine metabolism; CTP biosynthesis via de novo pathway; CTP from UDP: step 2/2.</text>
</comment>
<comment type="subunit">
    <text evidence="1">Homotetramer.</text>
</comment>
<comment type="miscellaneous">
    <text evidence="1">CTPSs have evolved a hybrid strategy for distinguishing between UTP and CTP. The overlapping regions of the product feedback inhibitory and substrate sites recognize a common feature in both compounds, the triphosphate moiety. To differentiate isosteric substrate and product pyrimidine rings, an additional pocket far from the expected kinase/ligase catalytic site, specifically recognizes the cytosine and ribose portions of the product inhibitor.</text>
</comment>
<comment type="similarity">
    <text evidence="1">Belongs to the CTP synthase family.</text>
</comment>
<reference key="1">
    <citation type="journal article" date="2001" name="J. Bacteriol.">
        <title>Genome of the bacterium Streptococcus pneumoniae strain R6.</title>
        <authorList>
            <person name="Hoskins J."/>
            <person name="Alborn W.E. Jr."/>
            <person name="Arnold J."/>
            <person name="Blaszczak L.C."/>
            <person name="Burgett S."/>
            <person name="DeHoff B.S."/>
            <person name="Estrem S.T."/>
            <person name="Fritz L."/>
            <person name="Fu D.-J."/>
            <person name="Fuller W."/>
            <person name="Geringer C."/>
            <person name="Gilmour R."/>
            <person name="Glass J.S."/>
            <person name="Khoja H."/>
            <person name="Kraft A.R."/>
            <person name="Lagace R.E."/>
            <person name="LeBlanc D.J."/>
            <person name="Lee L.N."/>
            <person name="Lefkowitz E.J."/>
            <person name="Lu J."/>
            <person name="Matsushima P."/>
            <person name="McAhren S.M."/>
            <person name="McHenney M."/>
            <person name="McLeaster K."/>
            <person name="Mundy C.W."/>
            <person name="Nicas T.I."/>
            <person name="Norris F.H."/>
            <person name="O'Gara M."/>
            <person name="Peery R.B."/>
            <person name="Robertson G.T."/>
            <person name="Rockey P."/>
            <person name="Sun P.-M."/>
            <person name="Winkler M.E."/>
            <person name="Yang Y."/>
            <person name="Young-Bellido M."/>
            <person name="Zhao G."/>
            <person name="Zook C.A."/>
            <person name="Baltz R.H."/>
            <person name="Jaskunas S.R."/>
            <person name="Rosteck P.R. Jr."/>
            <person name="Skatrud P.L."/>
            <person name="Glass J.I."/>
        </authorList>
    </citation>
    <scope>NUCLEOTIDE SEQUENCE [LARGE SCALE GENOMIC DNA]</scope>
    <source>
        <strain>ATCC BAA-255 / R6</strain>
    </source>
</reference>
<gene>
    <name evidence="1" type="primary">pyrG</name>
    <name type="ordered locus">spr0438</name>
</gene>